<protein>
    <recommendedName>
        <fullName evidence="7">Low-reducing polyketide synthase drtA</fullName>
        <ecNumber evidence="6">2.3.1.-</ecNumber>
    </recommendedName>
    <alternativeName>
        <fullName evidence="7">Drimane-type sesquiterpene ester biosynthesis cluster protein A</fullName>
    </alternativeName>
</protein>
<name>DRTA_ASPCI</name>
<feature type="chain" id="PRO_0000454531" description="Low-reducing polyketide synthase drtA">
    <location>
        <begin position="1"/>
        <end position="2359"/>
    </location>
</feature>
<feature type="domain" description="Ketosynthase family 3 (KS3)" evidence="3 8">
    <location>
        <begin position="17"/>
        <end position="444"/>
    </location>
</feature>
<feature type="domain" description="PKS/mFAS DH" evidence="4">
    <location>
        <begin position="940"/>
        <end position="1250"/>
    </location>
</feature>
<feature type="domain" description="Carrier" evidence="2 8">
    <location>
        <begin position="2280"/>
        <end position="2356"/>
    </location>
</feature>
<feature type="region of interest" description="Malonyl-CoA:ACP transacylase (MAT) domain" evidence="1 8">
    <location>
        <begin position="556"/>
        <end position="868"/>
    </location>
</feature>
<feature type="region of interest" description="Dehydratase (DH) domain" evidence="1 8">
    <location>
        <begin position="940"/>
        <end position="1245"/>
    </location>
</feature>
<feature type="region of interest" description="N-terminal hotdog fold" evidence="4">
    <location>
        <begin position="940"/>
        <end position="1077"/>
    </location>
</feature>
<feature type="region of interest" description="C-terminal hotdog fold" evidence="4">
    <location>
        <begin position="1089"/>
        <end position="1250"/>
    </location>
</feature>
<feature type="region of interest" description="Enoyl reductase (ER) domain" evidence="1 8">
    <location>
        <begin position="1659"/>
        <end position="1970"/>
    </location>
</feature>
<feature type="region of interest" description="Ketoreductase (KR) domain" evidence="1 8">
    <location>
        <begin position="1995"/>
        <end position="2172"/>
    </location>
</feature>
<feature type="active site" description="For beta-ketoacyl synthase activity" evidence="3">
    <location>
        <position position="190"/>
    </location>
</feature>
<feature type="active site" description="For beta-ketoacyl synthase activity" evidence="3">
    <location>
        <position position="327"/>
    </location>
</feature>
<feature type="active site" description="For beta-ketoacyl synthase activity" evidence="3">
    <location>
        <position position="367"/>
    </location>
</feature>
<feature type="active site" description="For malonyltransferase activity" evidence="5">
    <location>
        <position position="648"/>
    </location>
</feature>
<feature type="active site" description="Proton acceptor; for dehydratase activity" evidence="4">
    <location>
        <position position="972"/>
    </location>
</feature>
<feature type="active site" description="Proton donor; for dehydratase activity" evidence="4">
    <location>
        <position position="1153"/>
    </location>
</feature>
<feature type="modified residue" description="O-(pantetheine 4'-phosphoryl)serine" evidence="2">
    <location>
        <position position="2316"/>
    </location>
</feature>
<proteinExistence type="evidence at protein level"/>
<organism>
    <name type="scientific">Aspergillus calidoustus</name>
    <dbReference type="NCBI Taxonomy" id="454130"/>
    <lineage>
        <taxon>Eukaryota</taxon>
        <taxon>Fungi</taxon>
        <taxon>Dikarya</taxon>
        <taxon>Ascomycota</taxon>
        <taxon>Pezizomycotina</taxon>
        <taxon>Eurotiomycetes</taxon>
        <taxon>Eurotiomycetidae</taxon>
        <taxon>Eurotiales</taxon>
        <taxon>Aspergillaceae</taxon>
        <taxon>Aspergillus</taxon>
        <taxon>Aspergillus subgen. Nidulantes</taxon>
    </lineage>
</organism>
<keyword id="KW-0012">Acyltransferase</keyword>
<keyword id="KW-0511">Multifunctional enzyme</keyword>
<keyword id="KW-0521">NADP</keyword>
<keyword id="KW-0560">Oxidoreductase</keyword>
<keyword id="KW-0596">Phosphopantetheine</keyword>
<keyword id="KW-0597">Phosphoprotein</keyword>
<keyword id="KW-1185">Reference proteome</keyword>
<keyword id="KW-0808">Transferase</keyword>
<sequence length="2359" mass="254219">MDNTPDTLSISEEAAGLPPIAVVSFACRLPGQNSDPEALWRFLERGQTASNEVPESRFSAQAHYDGTRRPRTMKGRGGMFLHDVDPARFDAPFFNISAVEARSMDPQQRQLLEVVYEALENGGLTLDGISGEQIGCFVSSFTTDFLALQNRDPDDRPINLTTGTKRSIMSNRISHYFNIKGPSMTVDTACSGGLTSVDLACRYLAANDISAAVVAASHLFLNPDELLEEGQVGSVYSRTGLCQVFDAKADGYVKAEAVNAVILKRLDQAVADGDPIRAVIRASASNSNGATVGISTPSAEQQAACIRAAYKRAGISDFNATAYVECHGTGTQAGDPIEVNGLSAVFGGTRDPQAPLILGSVKGNLGHSEPAAGISGLIKAVLSIEKGKIPGQSTLKELNPKIDLLGGALQIPTKTISWPAVPLRRVSVNSFGFGGANAHVIVEEPKGSLGEEWSKPHASSRSSQALASRQSTSKKLYTMVFSAASEESLKRYYTDIKRHLADLNVKVKPSDLAYTLGQRRTHHAYRGYVVTSAANLNRAKVEFGEKGMEPPKVAFVFTGQGSQWPQMGAGLIKNFPCAAKRLRYLDTVLQSTSTPPSWSLVDELSEPRQADYYQKPELSQPLITALQLAILSILEEWGVLPRAVVGHSSGEIAAAYAAGYLSQEQAILAAFYRGQAAAVLGPTIVEPLGMCAVGAGTEQLKQLLPDMPREVQVACVNSPNSVTLSGPKSHLVGVQAQLEAQGTFARLLRVDLAYHSSYVADIAALYKKQLEAEWAKYPAPARASDAAQMFSSVTGHLLDQPCDSEYWRVNMASPVLFSDAAAELVKDSSATLLLEIGPSGALAGPVRQILEGISVKGVQYLAALDRGKDGGEAMHELAGKLYVADYPLSLGAVNFPSADEPTSRPSVLVDLPNYSWDHSAVYWHESDASKDWRFGQFPYHELLGRKILGTPWSAPSWKSIIRLDDMPWLKDHRMAGDPVFPAAGYLAMAIEAVYQARQSVNPIPDVAGVTDLQFVLRDVNFRRALALDSGKDTTVVLAFTEVSDDYTSWTGFRVLSIQEGTSVTHCDGRISVRQVAARAADKETLAPLAYSESAEHWYRALDHRGCTYGPDFQRLLEIECRAGQQETRSTLSRNPPSTGFPQHPYAMHPSTLDICFQSVFPALYSGLRSEIKSLLLPSHLEELTVGPSGGLPAEGETAVSVARAGHSGAGAKEKRRNHYTDASVWSTSTGQLLLEFKGLRFSELNMGDGVDADPALLVPAWLPDFEFLSQDQILTVLRPESAVADVINLVASKKPTLRVGEINLTSDSVSTAWFEGASEGLRGASEHYTYADPDSARLSTVRSSVGDRPNAEFKLLGKDANAIFADPGVDLVIVQYQDLVATAQTSVLERIKPSEAKGDVVYLFVQRSATTPSGEDADEALLQDAGFNTLFKIPIDGSSFAYLSRSIELATPPSEQEEPQVISIISADPQSGLLNTFTESLTEAGYAVQLQTTFGAPTNDVKAVVVLDDFSSPVLGDVTDEQWTSIRDLVLKAPSTIWVTQGAQHKVTNPNNALIHGLSRSIRSENPAVRLVTLDVESKSPRDNSVTILKLLDSIASREGGSGEDSEFVERDGILHVSRTLRKADAEELNVNDAPATAPNAQSLLDNAKHVKLGITNLGSFDSLELYEATGEEPPLAADQVEIEVYATGLNYKDVQISTGAIPGDDQALGFDGAGSVTKVGQNVHTFRVGDKVAFTDSGAFANRVRTTYKRVHHVPDGMALEVAAALPLSFMTAIYALVNIAGLRKGQSVLIHSGAGGVGIAAIQLAQYLQAEIYVTVGSDEKRSFLQEHLNIPASRIFSSRTTEFADAIIASTKGRGVDVILNSLTGELLDETWRICADGGILVDIGRGLRGRRLAPGPFERNCLVKAFDLTSKQVSDDIVRSLLTQAFGLFEKQHLQLIHPVRAFSYAEIRQAFEHLSTGRHVGKVVVSHGSDNGAVPIRPAPSLSVIRKDRSYLITGGLHGIGGTLAEYLALRGAKCIVVLSRSGSSTPRAAWIVETCRRLGCEIQVVKGDVTSYESIKGALQQAKLPVCGIVHGAMVLLDKPYELMDADSYRRCIAPKVRGAWNLHQAAEELGLELDFFTLLSSISGVIGQSGQANYAAANSFLDSFAAYRRGLGLPALSLDIGAVQDTGVAMENPGLLHYFTDPQWLNIEQGELFYLMDASIKEQQNARNAPSSQLIMALSFPLPATSDLLNDIRFRTLSRAGTSNQPAQNSANQESQAVTDFLCMQSSGADSTALTEAAIELFQSQLLRMLRLDEPIKANKPLSAYGMDSLSAVKLRNWVEKSFSVTFAVFEILGANGLQALCSKLITRLQTV</sequence>
<reference key="1">
    <citation type="journal article" date="2016" name="Genome Announc.">
        <title>Draft genome sequences of fungus Aspergillus calidoustus.</title>
        <authorList>
            <person name="Horn F."/>
            <person name="Linde J."/>
            <person name="Mattern D.J."/>
            <person name="Walther G."/>
            <person name="Guthke R."/>
            <person name="Scherlach K."/>
            <person name="Martin K."/>
            <person name="Brakhage A.A."/>
            <person name="Petzke L."/>
            <person name="Valiante V."/>
        </authorList>
    </citation>
    <scope>NUCLEOTIDE SEQUENCE [LARGE SCALE GENOMIC DNA]</scope>
    <source>
        <strain>SF006504</strain>
    </source>
</reference>
<reference key="2">
    <citation type="journal article" date="2021" name="Angew. Chem. Int. Ed.">
        <title>Biosynthesis of fungal drimane-type sesquiterpene esters.</title>
        <authorList>
            <person name="Huang Y."/>
            <person name="Hoefgen S."/>
            <person name="Valiante V."/>
        </authorList>
    </citation>
    <scope>FUNCTION</scope>
    <scope>DOMAIN</scope>
    <scope>DISRUPTION PHENOTYPE</scope>
    <scope>CATALYTIC ACTIVITY</scope>
    <scope>PATHWAY</scope>
</reference>
<dbReference type="EC" id="2.3.1.-" evidence="6"/>
<dbReference type="EMBL" id="CDMC01000002">
    <property type="protein sequence ID" value="CEN60541.1"/>
    <property type="molecule type" value="Genomic_DNA"/>
</dbReference>
<dbReference type="SMR" id="A0A0U4ZX08"/>
<dbReference type="STRING" id="454130.A0A0U4ZX08"/>
<dbReference type="OMA" id="HIKPIAP"/>
<dbReference type="OrthoDB" id="329835at2759"/>
<dbReference type="UniPathway" id="UPA00213"/>
<dbReference type="Proteomes" id="UP000054771">
    <property type="component" value="Unassembled WGS sequence"/>
</dbReference>
<dbReference type="GO" id="GO:0004312">
    <property type="term" value="F:fatty acid synthase activity"/>
    <property type="evidence" value="ECO:0007669"/>
    <property type="project" value="TreeGrafter"/>
</dbReference>
<dbReference type="GO" id="GO:0016491">
    <property type="term" value="F:oxidoreductase activity"/>
    <property type="evidence" value="ECO:0007669"/>
    <property type="project" value="UniProtKB-KW"/>
</dbReference>
<dbReference type="GO" id="GO:0031177">
    <property type="term" value="F:phosphopantetheine binding"/>
    <property type="evidence" value="ECO:0007669"/>
    <property type="project" value="InterPro"/>
</dbReference>
<dbReference type="GO" id="GO:0006633">
    <property type="term" value="P:fatty acid biosynthetic process"/>
    <property type="evidence" value="ECO:0007669"/>
    <property type="project" value="TreeGrafter"/>
</dbReference>
<dbReference type="GO" id="GO:0030639">
    <property type="term" value="P:polyketide biosynthetic process"/>
    <property type="evidence" value="ECO:0007669"/>
    <property type="project" value="UniProtKB-ARBA"/>
</dbReference>
<dbReference type="GO" id="GO:0016114">
    <property type="term" value="P:terpenoid biosynthetic process"/>
    <property type="evidence" value="ECO:0007669"/>
    <property type="project" value="UniProtKB-UniPathway"/>
</dbReference>
<dbReference type="CDD" id="cd05195">
    <property type="entry name" value="enoyl_red"/>
    <property type="match status" value="1"/>
</dbReference>
<dbReference type="CDD" id="cd00833">
    <property type="entry name" value="PKS"/>
    <property type="match status" value="1"/>
</dbReference>
<dbReference type="Gene3D" id="3.40.47.10">
    <property type="match status" value="1"/>
</dbReference>
<dbReference type="Gene3D" id="1.10.1200.10">
    <property type="entry name" value="ACP-like"/>
    <property type="match status" value="1"/>
</dbReference>
<dbReference type="Gene3D" id="3.40.366.10">
    <property type="entry name" value="Malonyl-Coenzyme A Acyl Carrier Protein, domain 2"/>
    <property type="match status" value="1"/>
</dbReference>
<dbReference type="Gene3D" id="3.90.180.10">
    <property type="entry name" value="Medium-chain alcohol dehydrogenases, catalytic domain"/>
    <property type="match status" value="1"/>
</dbReference>
<dbReference type="Gene3D" id="3.40.50.720">
    <property type="entry name" value="NAD(P)-binding Rossmann-like Domain"/>
    <property type="match status" value="2"/>
</dbReference>
<dbReference type="Gene3D" id="3.10.129.110">
    <property type="entry name" value="Polyketide synthase dehydratase"/>
    <property type="match status" value="1"/>
</dbReference>
<dbReference type="InterPro" id="IPR001227">
    <property type="entry name" value="Ac_transferase_dom_sf"/>
</dbReference>
<dbReference type="InterPro" id="IPR036736">
    <property type="entry name" value="ACP-like_sf"/>
</dbReference>
<dbReference type="InterPro" id="IPR014043">
    <property type="entry name" value="Acyl_transferase_dom"/>
</dbReference>
<dbReference type="InterPro" id="IPR016035">
    <property type="entry name" value="Acyl_Trfase/lysoPLipase"/>
</dbReference>
<dbReference type="InterPro" id="IPR013154">
    <property type="entry name" value="ADH-like_N"/>
</dbReference>
<dbReference type="InterPro" id="IPR011032">
    <property type="entry name" value="GroES-like_sf"/>
</dbReference>
<dbReference type="InterPro" id="IPR014031">
    <property type="entry name" value="Ketoacyl_synth_C"/>
</dbReference>
<dbReference type="InterPro" id="IPR014030">
    <property type="entry name" value="Ketoacyl_synth_N"/>
</dbReference>
<dbReference type="InterPro" id="IPR016036">
    <property type="entry name" value="Malonyl_transacylase_ACP-bd"/>
</dbReference>
<dbReference type="InterPro" id="IPR036291">
    <property type="entry name" value="NAD(P)-bd_dom_sf"/>
</dbReference>
<dbReference type="InterPro" id="IPR056501">
    <property type="entry name" value="NAD-bd_HRPKS_sdrA"/>
</dbReference>
<dbReference type="InterPro" id="IPR032821">
    <property type="entry name" value="PKS_assoc"/>
</dbReference>
<dbReference type="InterPro" id="IPR020841">
    <property type="entry name" value="PKS_Beta-ketoAc_synthase_dom"/>
</dbReference>
<dbReference type="InterPro" id="IPR042104">
    <property type="entry name" value="PKS_dehydratase_sf"/>
</dbReference>
<dbReference type="InterPro" id="IPR020807">
    <property type="entry name" value="PKS_DH"/>
</dbReference>
<dbReference type="InterPro" id="IPR049551">
    <property type="entry name" value="PKS_DH_C"/>
</dbReference>
<dbReference type="InterPro" id="IPR049552">
    <property type="entry name" value="PKS_DH_N"/>
</dbReference>
<dbReference type="InterPro" id="IPR020843">
    <property type="entry name" value="PKS_ER"/>
</dbReference>
<dbReference type="InterPro" id="IPR013968">
    <property type="entry name" value="PKS_KR"/>
</dbReference>
<dbReference type="InterPro" id="IPR049900">
    <property type="entry name" value="PKS_mFAS_DH"/>
</dbReference>
<dbReference type="InterPro" id="IPR050091">
    <property type="entry name" value="PKS_NRPS_Biosynth_Enz"/>
</dbReference>
<dbReference type="InterPro" id="IPR020806">
    <property type="entry name" value="PKS_PP-bd"/>
</dbReference>
<dbReference type="InterPro" id="IPR009081">
    <property type="entry name" value="PP-bd_ACP"/>
</dbReference>
<dbReference type="InterPro" id="IPR006162">
    <property type="entry name" value="Ppantetheine_attach_site"/>
</dbReference>
<dbReference type="InterPro" id="IPR016039">
    <property type="entry name" value="Thiolase-like"/>
</dbReference>
<dbReference type="PANTHER" id="PTHR43775:SF18">
    <property type="entry name" value="ENZYME, PUTATIVE (JCVI)-RELATED"/>
    <property type="match status" value="1"/>
</dbReference>
<dbReference type="PANTHER" id="PTHR43775">
    <property type="entry name" value="FATTY ACID SYNTHASE"/>
    <property type="match status" value="1"/>
</dbReference>
<dbReference type="Pfam" id="PF00698">
    <property type="entry name" value="Acyl_transf_1"/>
    <property type="match status" value="1"/>
</dbReference>
<dbReference type="Pfam" id="PF08240">
    <property type="entry name" value="ADH_N"/>
    <property type="match status" value="1"/>
</dbReference>
<dbReference type="Pfam" id="PF13602">
    <property type="entry name" value="ADH_zinc_N_2"/>
    <property type="match status" value="1"/>
</dbReference>
<dbReference type="Pfam" id="PF16197">
    <property type="entry name" value="KAsynt_C_assoc"/>
    <property type="match status" value="1"/>
</dbReference>
<dbReference type="Pfam" id="PF00109">
    <property type="entry name" value="ketoacyl-synt"/>
    <property type="match status" value="1"/>
</dbReference>
<dbReference type="Pfam" id="PF02801">
    <property type="entry name" value="Ketoacyl-synt_C"/>
    <property type="match status" value="1"/>
</dbReference>
<dbReference type="Pfam" id="PF08659">
    <property type="entry name" value="KR"/>
    <property type="match status" value="1"/>
</dbReference>
<dbReference type="Pfam" id="PF23114">
    <property type="entry name" value="NAD-bd_HRPKS_sdrA"/>
    <property type="match status" value="1"/>
</dbReference>
<dbReference type="Pfam" id="PF21089">
    <property type="entry name" value="PKS_DH_N"/>
    <property type="match status" value="1"/>
</dbReference>
<dbReference type="Pfam" id="PF00550">
    <property type="entry name" value="PP-binding"/>
    <property type="match status" value="1"/>
</dbReference>
<dbReference type="Pfam" id="PF14765">
    <property type="entry name" value="PS-DH"/>
    <property type="match status" value="1"/>
</dbReference>
<dbReference type="SMART" id="SM00827">
    <property type="entry name" value="PKS_AT"/>
    <property type="match status" value="1"/>
</dbReference>
<dbReference type="SMART" id="SM00826">
    <property type="entry name" value="PKS_DH"/>
    <property type="match status" value="1"/>
</dbReference>
<dbReference type="SMART" id="SM00829">
    <property type="entry name" value="PKS_ER"/>
    <property type="match status" value="1"/>
</dbReference>
<dbReference type="SMART" id="SM00822">
    <property type="entry name" value="PKS_KR"/>
    <property type="match status" value="1"/>
</dbReference>
<dbReference type="SMART" id="SM00825">
    <property type="entry name" value="PKS_KS"/>
    <property type="match status" value="1"/>
</dbReference>
<dbReference type="SMART" id="SM00823">
    <property type="entry name" value="PKS_PP"/>
    <property type="match status" value="1"/>
</dbReference>
<dbReference type="SUPFAM" id="SSF47336">
    <property type="entry name" value="ACP-like"/>
    <property type="match status" value="1"/>
</dbReference>
<dbReference type="SUPFAM" id="SSF52151">
    <property type="entry name" value="FabD/lysophospholipase-like"/>
    <property type="match status" value="1"/>
</dbReference>
<dbReference type="SUPFAM" id="SSF50129">
    <property type="entry name" value="GroES-like"/>
    <property type="match status" value="1"/>
</dbReference>
<dbReference type="SUPFAM" id="SSF51735">
    <property type="entry name" value="NAD(P)-binding Rossmann-fold domains"/>
    <property type="match status" value="3"/>
</dbReference>
<dbReference type="SUPFAM" id="SSF55048">
    <property type="entry name" value="Probable ACP-binding domain of malonyl-CoA ACP transacylase"/>
    <property type="match status" value="1"/>
</dbReference>
<dbReference type="SUPFAM" id="SSF53901">
    <property type="entry name" value="Thiolase-like"/>
    <property type="match status" value="1"/>
</dbReference>
<dbReference type="PROSITE" id="PS50075">
    <property type="entry name" value="CARRIER"/>
    <property type="match status" value="1"/>
</dbReference>
<dbReference type="PROSITE" id="PS52004">
    <property type="entry name" value="KS3_2"/>
    <property type="match status" value="1"/>
</dbReference>
<dbReference type="PROSITE" id="PS00012">
    <property type="entry name" value="PHOSPHOPANTETHEINE"/>
    <property type="match status" value="1"/>
</dbReference>
<dbReference type="PROSITE" id="PS52019">
    <property type="entry name" value="PKS_MFAS_DH"/>
    <property type="match status" value="1"/>
</dbReference>
<gene>
    <name evidence="7" type="primary">drtA</name>
    <name type="ORF">ASPCAL02977</name>
</gene>
<accession>A0A0U4ZX08</accession>
<comment type="function">
    <text evidence="6">Low-reducing polyketide synthase; part of the gene cluster that mediates the biosynthesis of various drimane-type sesquiterpene esters, compounds that exhibit diverse biological activities and are widely present in eukaryotes (PubMed:34468074). The pathway begins with the synthesis of the backbone drimenol by the terpene cyclase drtB using farnesyl pyrophosphate (FPP) as substrate (PubMed:34468074). The cytochrome P450 monooxygenase drtD is then responsible for the hydroxylations at C-6, C-9 and C-12, as well as the oxidation of hydroxyl groups at C-6 and C-11 to a ketone and an aldehyde, respectively (PubMed:34468074). Then, the biosynthesis can go in two directions, either the hydroxylated drimenol is further hydroxylated at C-2 and C-3 by an enzyme(s) not associated with the drt cluster, or the FAD-binding oxidoreductase drtC further oxidizes C-11 or C-12 to form the butyrolactone ring (PubMed:34468074). DrtB, drtD and drtC are solely responsible for the formation of the different drimane structures observed during drimane sesquiterpenes biosynthesis (PubMed:34468074). The polyketide synthase drtA synthesizes different lengths (C6 and C8) of PKS chains, which are then oxidized to varying degrees by the short-chain dehydrogenase drtF (PubMed:34468074). Finally, these PKS chains are transferred onto drimane sesquiterpenes by the acyltransferase drtE, forming the sesquiterpene esters (PubMed:34468074). In addition to the different fatty acyl-CoA chains produced by drtA, drtE is also able to use cinnamoyl-CoA as a substrate (PubMed:34468074).</text>
</comment>
<comment type="pathway">
    <text evidence="6">Secondary metabolite biosynthesis; terpenoid biosynthesis.</text>
</comment>
<comment type="domain">
    <text evidence="8">Multidomain protein; including a ketosynthase (KS) that catalyzes repeated decarboxylative condensation to elongate the polyketide backbone; a malonyl-CoA:ACP transacylase (MAT) that selects and transfers the extender unit malonyl-CoA; a dehydratase (DH) domain that reduces hydroxyl groups to enoyl groups; an enoylreductase (ER) domain that reduces enoyl groups to alkyl group; a ketoreductase (KR) domain that catalyzes beta-ketoreduction steps; and an acyl-carrier protein (ACP) that serves as the tether of the growing and completed polyketide via its phosphopantetheinyl arm.</text>
</comment>
<comment type="disruption phenotype">
    <text evidence="6">Abolishes the production of all the sesquiterpene ester compounds.</text>
</comment>
<comment type="miscellaneous">
    <text evidence="6">The various drimane-type sesquiterpene esters produced by the A.calidoustus drt cluster include asperiene C, asperiene A, (6-Strobilactone-B) ester of (E,E)-6-carbonyl-7-hydroxy-2,4-octadienoic acid, ustusolate A, ustusolate C, ustusolide E, ustusoic acid A, (2'E,4'E)-6-(1'-carboxyhexa-2',4',-diene)-9-hydroxy-drim-7-ene-11,12-olide, RES-1149-2, as well as the 3 newly identified compounds calidoustene A, calidoustene B and calidoustene C.</text>
</comment>
<evidence type="ECO:0000255" key="1"/>
<evidence type="ECO:0000255" key="2">
    <source>
        <dbReference type="PROSITE-ProRule" id="PRU00258"/>
    </source>
</evidence>
<evidence type="ECO:0000255" key="3">
    <source>
        <dbReference type="PROSITE-ProRule" id="PRU01348"/>
    </source>
</evidence>
<evidence type="ECO:0000255" key="4">
    <source>
        <dbReference type="PROSITE-ProRule" id="PRU01363"/>
    </source>
</evidence>
<evidence type="ECO:0000255" key="5">
    <source>
        <dbReference type="PROSITE-ProRule" id="PRU10022"/>
    </source>
</evidence>
<evidence type="ECO:0000269" key="6">
    <source>
    </source>
</evidence>
<evidence type="ECO:0000303" key="7">
    <source>
    </source>
</evidence>
<evidence type="ECO:0000305" key="8">
    <source>
    </source>
</evidence>